<gene>
    <name type="primary">ARL6IP1</name>
    <name type="synonym">ARL6IP</name>
    <name evidence="11" type="synonym">ARMER</name>
    <name type="synonym">KIAA0069</name>
</gene>
<feature type="chain" id="PRO_0000064655" description="ADP-ribosylation factor-like protein 6-interacting protein 1">
    <location>
        <begin position="1"/>
        <end position="203"/>
    </location>
</feature>
<feature type="topological domain" description="Cytoplasmic" evidence="2">
    <location>
        <begin position="1"/>
        <end position="41"/>
    </location>
</feature>
<feature type="transmembrane region" description="Helical" evidence="2">
    <location>
        <begin position="42"/>
        <end position="62"/>
    </location>
</feature>
<feature type="topological domain" description="Lumenal" evidence="2">
    <location>
        <begin position="63"/>
        <end position="65"/>
    </location>
</feature>
<feature type="transmembrane region" description="Helical" evidence="2">
    <location>
        <begin position="66"/>
        <end position="86"/>
    </location>
</feature>
<feature type="topological domain" description="Cytoplasmic" evidence="2">
    <location>
        <begin position="87"/>
        <end position="133"/>
    </location>
</feature>
<feature type="transmembrane region" description="Helical" evidence="2">
    <location>
        <begin position="134"/>
        <end position="175"/>
    </location>
</feature>
<feature type="topological domain" description="Lumenal" evidence="2">
    <location>
        <begin position="176"/>
        <end position="203"/>
    </location>
</feature>
<feature type="splice variant" id="VSP_057297" description="In isoform 2." evidence="12">
    <location>
        <begin position="1"/>
        <end position="29"/>
    </location>
</feature>
<feature type="splice variant" id="VSP_057298" description="In isoform 3." evidence="12">
    <location>
        <begin position="105"/>
        <end position="156"/>
    </location>
</feature>
<feature type="sequence variant" id="VAR_082139" description="In SPG61; uncertain significance." evidence="9">
    <location>
        <begin position="38"/>
        <end position="203"/>
    </location>
</feature>
<feature type="sequence conflict" description="In Ref. 2; BAH13527." evidence="13" ref="2">
    <original>S</original>
    <variation>I</variation>
    <location>
        <position position="110"/>
    </location>
</feature>
<evidence type="ECO:0000250" key="1">
    <source>
        <dbReference type="UniProtKB" id="Q9JKW0"/>
    </source>
</evidence>
<evidence type="ECO:0000255" key="2"/>
<evidence type="ECO:0000269" key="3">
    <source>
    </source>
</evidence>
<evidence type="ECO:0000269" key="4">
    <source>
    </source>
</evidence>
<evidence type="ECO:0000269" key="5">
    <source>
    </source>
</evidence>
<evidence type="ECO:0000269" key="6">
    <source>
    </source>
</evidence>
<evidence type="ECO:0000269" key="7">
    <source>
    </source>
</evidence>
<evidence type="ECO:0000269" key="8">
    <source>
    </source>
</evidence>
<evidence type="ECO:0000269" key="9">
    <source>
    </source>
</evidence>
<evidence type="ECO:0000303" key="10">
    <source>
    </source>
</evidence>
<evidence type="ECO:0000303" key="11">
    <source>
    </source>
</evidence>
<evidence type="ECO:0000303" key="12">
    <source>
    </source>
</evidence>
<evidence type="ECO:0000305" key="13"/>
<organism>
    <name type="scientific">Homo sapiens</name>
    <name type="common">Human</name>
    <dbReference type="NCBI Taxonomy" id="9606"/>
    <lineage>
        <taxon>Eukaryota</taxon>
        <taxon>Metazoa</taxon>
        <taxon>Chordata</taxon>
        <taxon>Craniata</taxon>
        <taxon>Vertebrata</taxon>
        <taxon>Euteleostomi</taxon>
        <taxon>Mammalia</taxon>
        <taxon>Eutheria</taxon>
        <taxon>Euarchontoglires</taxon>
        <taxon>Primates</taxon>
        <taxon>Haplorrhini</taxon>
        <taxon>Catarrhini</taxon>
        <taxon>Hominidae</taxon>
        <taxon>Homo</taxon>
    </lineage>
</organism>
<accession>Q15041</accession>
<accession>B7Z6S5</accession>
<accession>B7Z791</accession>
<accession>F5GXP4</accession>
<dbReference type="EMBL" id="D31885">
    <property type="protein sequence ID" value="BAA06683.1"/>
    <property type="status" value="ALT_INIT"/>
    <property type="molecule type" value="mRNA"/>
</dbReference>
<dbReference type="EMBL" id="AK300869">
    <property type="protein sequence ID" value="BAH13361.1"/>
    <property type="molecule type" value="mRNA"/>
</dbReference>
<dbReference type="EMBL" id="AK301636">
    <property type="protein sequence ID" value="BAH13527.1"/>
    <property type="molecule type" value="mRNA"/>
</dbReference>
<dbReference type="EMBL" id="AC138811">
    <property type="status" value="NOT_ANNOTATED_CDS"/>
    <property type="molecule type" value="Genomic_DNA"/>
</dbReference>
<dbReference type="EMBL" id="BC010281">
    <property type="protein sequence ID" value="AAH10281.1"/>
    <property type="molecule type" value="mRNA"/>
</dbReference>
<dbReference type="CCDS" id="CCDS10572.1">
    <molecule id="Q15041-1"/>
</dbReference>
<dbReference type="CCDS" id="CCDS81951.1">
    <molecule id="Q15041-2"/>
</dbReference>
<dbReference type="RefSeq" id="NP_001300787.1">
    <molecule id="Q15041-2"/>
    <property type="nucleotide sequence ID" value="NM_001313858.1"/>
</dbReference>
<dbReference type="RefSeq" id="NP_055976.1">
    <molecule id="Q15041-1"/>
    <property type="nucleotide sequence ID" value="NM_015161.3"/>
</dbReference>
<dbReference type="BioGRID" id="116812">
    <property type="interactions" value="138"/>
</dbReference>
<dbReference type="FunCoup" id="Q15041">
    <property type="interactions" value="1958"/>
</dbReference>
<dbReference type="IntAct" id="Q15041">
    <property type="interactions" value="111"/>
</dbReference>
<dbReference type="MINT" id="Q15041"/>
<dbReference type="STRING" id="9606.ENSP00000306788"/>
<dbReference type="iPTMnet" id="Q15041"/>
<dbReference type="PhosphoSitePlus" id="Q15041"/>
<dbReference type="SwissPalm" id="Q15041"/>
<dbReference type="BioMuta" id="ARL6IP1"/>
<dbReference type="DMDM" id="14424435"/>
<dbReference type="jPOST" id="Q15041"/>
<dbReference type="MassIVE" id="Q15041"/>
<dbReference type="PaxDb" id="9606-ENSP00000306788"/>
<dbReference type="PeptideAtlas" id="Q15041"/>
<dbReference type="ProteomicsDB" id="24482"/>
<dbReference type="ProteomicsDB" id="60389">
    <molecule id="Q15041-1"/>
</dbReference>
<dbReference type="Pumba" id="Q15041"/>
<dbReference type="Antibodypedia" id="11964">
    <property type="antibodies" value="282 antibodies from 32 providers"/>
</dbReference>
<dbReference type="DNASU" id="23204"/>
<dbReference type="Ensembl" id="ENST00000304414.12">
    <molecule id="Q15041-1"/>
    <property type="protein sequence ID" value="ENSP00000306788.7"/>
    <property type="gene ID" value="ENSG00000170540.16"/>
</dbReference>
<dbReference type="Ensembl" id="ENST00000546206.6">
    <molecule id="Q15041-2"/>
    <property type="protein sequence ID" value="ENSP00000440048.2"/>
    <property type="gene ID" value="ENSG00000170540.16"/>
</dbReference>
<dbReference type="GeneID" id="23204"/>
<dbReference type="KEGG" id="hsa:23204"/>
<dbReference type="MANE-Select" id="ENST00000304414.12">
    <property type="protein sequence ID" value="ENSP00000306788.7"/>
    <property type="RefSeq nucleotide sequence ID" value="NM_015161.3"/>
    <property type="RefSeq protein sequence ID" value="NP_055976.1"/>
</dbReference>
<dbReference type="UCSC" id="uc002dfl.2">
    <molecule id="Q15041-1"/>
    <property type="organism name" value="human"/>
</dbReference>
<dbReference type="AGR" id="HGNC:697"/>
<dbReference type="CTD" id="23204"/>
<dbReference type="DisGeNET" id="23204"/>
<dbReference type="GeneCards" id="ARL6IP1"/>
<dbReference type="HGNC" id="HGNC:697">
    <property type="gene designation" value="ARL6IP1"/>
</dbReference>
<dbReference type="HPA" id="ENSG00000170540">
    <property type="expression patterns" value="Low tissue specificity"/>
</dbReference>
<dbReference type="MalaCards" id="ARL6IP1"/>
<dbReference type="MIM" id="607669">
    <property type="type" value="gene"/>
</dbReference>
<dbReference type="MIM" id="615685">
    <property type="type" value="phenotype"/>
</dbReference>
<dbReference type="neXtProt" id="NX_Q15041"/>
<dbReference type="OpenTargets" id="ENSG00000170540"/>
<dbReference type="Orphanet" id="401780">
    <property type="disease" value="Autosomal recessive spastic paraplegia type 61"/>
</dbReference>
<dbReference type="PharmGKB" id="PA162376894"/>
<dbReference type="VEuPathDB" id="HostDB:ENSG00000170540"/>
<dbReference type="eggNOG" id="ENOG502QTTI">
    <property type="taxonomic scope" value="Eukaryota"/>
</dbReference>
<dbReference type="GeneTree" id="ENSGT00940000154937"/>
<dbReference type="HOGENOM" id="CLU_100749_0_0_1"/>
<dbReference type="InParanoid" id="Q15041"/>
<dbReference type="OMA" id="WTGQKEK"/>
<dbReference type="OrthoDB" id="6416122at2759"/>
<dbReference type="PAN-GO" id="Q15041">
    <property type="GO annotations" value="3 GO annotations based on evolutionary models"/>
</dbReference>
<dbReference type="PhylomeDB" id="Q15041"/>
<dbReference type="TreeFam" id="TF105477"/>
<dbReference type="PathwayCommons" id="Q15041"/>
<dbReference type="SignaLink" id="Q15041"/>
<dbReference type="BioGRID-ORCS" id="23204">
    <property type="hits" value="18 hits in 1155 CRISPR screens"/>
</dbReference>
<dbReference type="ChiTaRS" id="ARL6IP1">
    <property type="organism name" value="human"/>
</dbReference>
<dbReference type="GeneWiki" id="ARL6IP1"/>
<dbReference type="GenomeRNAi" id="23204"/>
<dbReference type="Pharos" id="Q15041">
    <property type="development level" value="Tbio"/>
</dbReference>
<dbReference type="PRO" id="PR:Q15041"/>
<dbReference type="Proteomes" id="UP000005640">
    <property type="component" value="Chromosome 16"/>
</dbReference>
<dbReference type="RNAct" id="Q15041">
    <property type="molecule type" value="protein"/>
</dbReference>
<dbReference type="Bgee" id="ENSG00000170540">
    <property type="expression patterns" value="Expressed in pigmented layer of retina and 207 other cell types or tissues"/>
</dbReference>
<dbReference type="ExpressionAtlas" id="Q15041">
    <property type="expression patterns" value="baseline and differential"/>
</dbReference>
<dbReference type="GO" id="GO:0005829">
    <property type="term" value="C:cytosol"/>
    <property type="evidence" value="ECO:0007669"/>
    <property type="project" value="Ensembl"/>
</dbReference>
<dbReference type="GO" id="GO:0005783">
    <property type="term" value="C:endoplasmic reticulum"/>
    <property type="evidence" value="ECO:0000314"/>
    <property type="project" value="HPA"/>
</dbReference>
<dbReference type="GO" id="GO:0005789">
    <property type="term" value="C:endoplasmic reticulum membrane"/>
    <property type="evidence" value="ECO:0000314"/>
    <property type="project" value="UniProtKB"/>
</dbReference>
<dbReference type="GO" id="GO:0071782">
    <property type="term" value="C:endoplasmic reticulum tubular network"/>
    <property type="evidence" value="ECO:0000314"/>
    <property type="project" value="FlyBase"/>
</dbReference>
<dbReference type="GO" id="GO:0016020">
    <property type="term" value="C:membrane"/>
    <property type="evidence" value="ECO:0007005"/>
    <property type="project" value="UniProtKB"/>
</dbReference>
<dbReference type="GO" id="GO:0005784">
    <property type="term" value="C:Sec61 translocon complex"/>
    <property type="evidence" value="ECO:0000318"/>
    <property type="project" value="GO_Central"/>
</dbReference>
<dbReference type="GO" id="GO:0042802">
    <property type="term" value="F:identical protein binding"/>
    <property type="evidence" value="ECO:0000353"/>
    <property type="project" value="IntAct"/>
</dbReference>
<dbReference type="GO" id="GO:0006915">
    <property type="term" value="P:apoptotic process"/>
    <property type="evidence" value="ECO:0007669"/>
    <property type="project" value="UniProtKB-KW"/>
</dbReference>
<dbReference type="GO" id="GO:0006613">
    <property type="term" value="P:cotranslational protein targeting to membrane"/>
    <property type="evidence" value="ECO:0000318"/>
    <property type="project" value="GO_Central"/>
</dbReference>
<dbReference type="GO" id="GO:0071787">
    <property type="term" value="P:endoplasmic reticulum tubular network formation"/>
    <property type="evidence" value="ECO:0000314"/>
    <property type="project" value="UniProtKB"/>
</dbReference>
<dbReference type="GO" id="GO:1990809">
    <property type="term" value="P:endoplasmic reticulum tubular network membrane organization"/>
    <property type="evidence" value="ECO:0000314"/>
    <property type="project" value="UniProtKB"/>
</dbReference>
<dbReference type="GO" id="GO:0043066">
    <property type="term" value="P:negative regulation of apoptotic process"/>
    <property type="evidence" value="ECO:0000314"/>
    <property type="project" value="UniProtKB"/>
</dbReference>
<dbReference type="GO" id="GO:0002038">
    <property type="term" value="P:positive regulation of L-glutamate import across plasma membrane"/>
    <property type="evidence" value="ECO:0000250"/>
    <property type="project" value="UniProtKB"/>
</dbReference>
<dbReference type="GO" id="GO:1903371">
    <property type="term" value="P:regulation of endoplasmic reticulum tubular network organization"/>
    <property type="evidence" value="ECO:0000315"/>
    <property type="project" value="CACAO"/>
</dbReference>
<dbReference type="CDD" id="cd22559">
    <property type="entry name" value="Arl6IP1"/>
    <property type="match status" value="1"/>
</dbReference>
<dbReference type="InterPro" id="IPR052114">
    <property type="entry name" value="ER_autophagy_membrane_reg"/>
</dbReference>
<dbReference type="PANTHER" id="PTHR20952:SF0">
    <property type="entry name" value="ADP-RIBOSYLATION FACTOR-LIKE PROTEIN 6-INTERACTING PROTEIN 1"/>
    <property type="match status" value="1"/>
</dbReference>
<dbReference type="PANTHER" id="PTHR20952">
    <property type="entry name" value="ADP-RIBOSYLATION-LIKE FACTOR 6-INTERACTING PROTEIN"/>
    <property type="match status" value="1"/>
</dbReference>
<dbReference type="Pfam" id="PF24456">
    <property type="entry name" value="RHD_RETREG1-3"/>
    <property type="match status" value="1"/>
</dbReference>
<keyword id="KW-0025">Alternative splicing</keyword>
<keyword id="KW-0053">Apoptosis</keyword>
<keyword id="KW-0225">Disease variant</keyword>
<keyword id="KW-0256">Endoplasmic reticulum</keyword>
<keyword id="KW-0890">Hereditary spastic paraplegia</keyword>
<keyword id="KW-0472">Membrane</keyword>
<keyword id="KW-0523">Neurodegeneration</keyword>
<keyword id="KW-1267">Proteomics identification</keyword>
<keyword id="KW-1185">Reference proteome</keyword>
<keyword id="KW-0812">Transmembrane</keyword>
<keyword id="KW-1133">Transmembrane helix</keyword>
<reference key="1">
    <citation type="journal article" date="1994" name="DNA Res.">
        <title>Prediction of the coding sequences of unidentified human genes. II. The coding sequences of 40 new genes (KIAA0041-KIAA0080) deduced by analysis of cDNA clones from human cell line KG-1.</title>
        <authorList>
            <person name="Nomura N."/>
            <person name="Nagase T."/>
            <person name="Miyajima N."/>
            <person name="Sazuka T."/>
            <person name="Tanaka A."/>
            <person name="Sato S."/>
            <person name="Seki N."/>
            <person name="Kawarabayasi Y."/>
            <person name="Ishikawa K."/>
            <person name="Tabata S."/>
        </authorList>
    </citation>
    <scope>NUCLEOTIDE SEQUENCE [LARGE SCALE MRNA] (ISOFORM 1)</scope>
    <source>
        <tissue>Bone marrow</tissue>
    </source>
</reference>
<reference key="2">
    <citation type="journal article" date="2004" name="Nat. Genet.">
        <title>Complete sequencing and characterization of 21,243 full-length human cDNAs.</title>
        <authorList>
            <person name="Ota T."/>
            <person name="Suzuki Y."/>
            <person name="Nishikawa T."/>
            <person name="Otsuki T."/>
            <person name="Sugiyama T."/>
            <person name="Irie R."/>
            <person name="Wakamatsu A."/>
            <person name="Hayashi K."/>
            <person name="Sato H."/>
            <person name="Nagai K."/>
            <person name="Kimura K."/>
            <person name="Makita H."/>
            <person name="Sekine M."/>
            <person name="Obayashi M."/>
            <person name="Nishi T."/>
            <person name="Shibahara T."/>
            <person name="Tanaka T."/>
            <person name="Ishii S."/>
            <person name="Yamamoto J."/>
            <person name="Saito K."/>
            <person name="Kawai Y."/>
            <person name="Isono Y."/>
            <person name="Nakamura Y."/>
            <person name="Nagahari K."/>
            <person name="Murakami K."/>
            <person name="Yasuda T."/>
            <person name="Iwayanagi T."/>
            <person name="Wagatsuma M."/>
            <person name="Shiratori A."/>
            <person name="Sudo H."/>
            <person name="Hosoiri T."/>
            <person name="Kaku Y."/>
            <person name="Kodaira H."/>
            <person name="Kondo H."/>
            <person name="Sugawara M."/>
            <person name="Takahashi M."/>
            <person name="Kanda K."/>
            <person name="Yokoi T."/>
            <person name="Furuya T."/>
            <person name="Kikkawa E."/>
            <person name="Omura Y."/>
            <person name="Abe K."/>
            <person name="Kamihara K."/>
            <person name="Katsuta N."/>
            <person name="Sato K."/>
            <person name="Tanikawa M."/>
            <person name="Yamazaki M."/>
            <person name="Ninomiya K."/>
            <person name="Ishibashi T."/>
            <person name="Yamashita H."/>
            <person name="Murakawa K."/>
            <person name="Fujimori K."/>
            <person name="Tanai H."/>
            <person name="Kimata M."/>
            <person name="Watanabe M."/>
            <person name="Hiraoka S."/>
            <person name="Chiba Y."/>
            <person name="Ishida S."/>
            <person name="Ono Y."/>
            <person name="Takiguchi S."/>
            <person name="Watanabe S."/>
            <person name="Yosida M."/>
            <person name="Hotuta T."/>
            <person name="Kusano J."/>
            <person name="Kanehori K."/>
            <person name="Takahashi-Fujii A."/>
            <person name="Hara H."/>
            <person name="Tanase T.-O."/>
            <person name="Nomura Y."/>
            <person name="Togiya S."/>
            <person name="Komai F."/>
            <person name="Hara R."/>
            <person name="Takeuchi K."/>
            <person name="Arita M."/>
            <person name="Imose N."/>
            <person name="Musashino K."/>
            <person name="Yuuki H."/>
            <person name="Oshima A."/>
            <person name="Sasaki N."/>
            <person name="Aotsuka S."/>
            <person name="Yoshikawa Y."/>
            <person name="Matsunawa H."/>
            <person name="Ichihara T."/>
            <person name="Shiohata N."/>
            <person name="Sano S."/>
            <person name="Moriya S."/>
            <person name="Momiyama H."/>
            <person name="Satoh N."/>
            <person name="Takami S."/>
            <person name="Terashima Y."/>
            <person name="Suzuki O."/>
            <person name="Nakagawa S."/>
            <person name="Senoh A."/>
            <person name="Mizoguchi H."/>
            <person name="Goto Y."/>
            <person name="Shimizu F."/>
            <person name="Wakebe H."/>
            <person name="Hishigaki H."/>
            <person name="Watanabe T."/>
            <person name="Sugiyama A."/>
            <person name="Takemoto M."/>
            <person name="Kawakami B."/>
            <person name="Yamazaki M."/>
            <person name="Watanabe K."/>
            <person name="Kumagai A."/>
            <person name="Itakura S."/>
            <person name="Fukuzumi Y."/>
            <person name="Fujimori Y."/>
            <person name="Komiyama M."/>
            <person name="Tashiro H."/>
            <person name="Tanigami A."/>
            <person name="Fujiwara T."/>
            <person name="Ono T."/>
            <person name="Yamada K."/>
            <person name="Fujii Y."/>
            <person name="Ozaki K."/>
            <person name="Hirao M."/>
            <person name="Ohmori Y."/>
            <person name="Kawabata A."/>
            <person name="Hikiji T."/>
            <person name="Kobatake N."/>
            <person name="Inagaki H."/>
            <person name="Ikema Y."/>
            <person name="Okamoto S."/>
            <person name="Okitani R."/>
            <person name="Kawakami T."/>
            <person name="Noguchi S."/>
            <person name="Itoh T."/>
            <person name="Shigeta K."/>
            <person name="Senba T."/>
            <person name="Matsumura K."/>
            <person name="Nakajima Y."/>
            <person name="Mizuno T."/>
            <person name="Morinaga M."/>
            <person name="Sasaki M."/>
            <person name="Togashi T."/>
            <person name="Oyama M."/>
            <person name="Hata H."/>
            <person name="Watanabe M."/>
            <person name="Komatsu T."/>
            <person name="Mizushima-Sugano J."/>
            <person name="Satoh T."/>
            <person name="Shirai Y."/>
            <person name="Takahashi Y."/>
            <person name="Nakagawa K."/>
            <person name="Okumura K."/>
            <person name="Nagase T."/>
            <person name="Nomura N."/>
            <person name="Kikuchi H."/>
            <person name="Masuho Y."/>
            <person name="Yamashita R."/>
            <person name="Nakai K."/>
            <person name="Yada T."/>
            <person name="Nakamura Y."/>
            <person name="Ohara O."/>
            <person name="Isogai T."/>
            <person name="Sugano S."/>
        </authorList>
    </citation>
    <scope>NUCLEOTIDE SEQUENCE [LARGE SCALE MRNA] (ISOFORMS 2 AND 3)</scope>
    <source>
        <tissue>Esophagus</tissue>
        <tissue>Small intestine</tissue>
    </source>
</reference>
<reference key="3">
    <citation type="journal article" date="2004" name="Nature">
        <title>The sequence and analysis of duplication-rich human chromosome 16.</title>
        <authorList>
            <person name="Martin J."/>
            <person name="Han C."/>
            <person name="Gordon L.A."/>
            <person name="Terry A."/>
            <person name="Prabhakar S."/>
            <person name="She X."/>
            <person name="Xie G."/>
            <person name="Hellsten U."/>
            <person name="Chan Y.M."/>
            <person name="Altherr M."/>
            <person name="Couronne O."/>
            <person name="Aerts A."/>
            <person name="Bajorek E."/>
            <person name="Black S."/>
            <person name="Blumer H."/>
            <person name="Branscomb E."/>
            <person name="Brown N.C."/>
            <person name="Bruno W.J."/>
            <person name="Buckingham J.M."/>
            <person name="Callen D.F."/>
            <person name="Campbell C.S."/>
            <person name="Campbell M.L."/>
            <person name="Campbell E.W."/>
            <person name="Caoile C."/>
            <person name="Challacombe J.F."/>
            <person name="Chasteen L.A."/>
            <person name="Chertkov O."/>
            <person name="Chi H.C."/>
            <person name="Christensen M."/>
            <person name="Clark L.M."/>
            <person name="Cohn J.D."/>
            <person name="Denys M."/>
            <person name="Detter J.C."/>
            <person name="Dickson M."/>
            <person name="Dimitrijevic-Bussod M."/>
            <person name="Escobar J."/>
            <person name="Fawcett J.J."/>
            <person name="Flowers D."/>
            <person name="Fotopulos D."/>
            <person name="Glavina T."/>
            <person name="Gomez M."/>
            <person name="Gonzales E."/>
            <person name="Goodstein D."/>
            <person name="Goodwin L.A."/>
            <person name="Grady D.L."/>
            <person name="Grigoriev I."/>
            <person name="Groza M."/>
            <person name="Hammon N."/>
            <person name="Hawkins T."/>
            <person name="Haydu L."/>
            <person name="Hildebrand C.E."/>
            <person name="Huang W."/>
            <person name="Israni S."/>
            <person name="Jett J."/>
            <person name="Jewett P.B."/>
            <person name="Kadner K."/>
            <person name="Kimball H."/>
            <person name="Kobayashi A."/>
            <person name="Krawczyk M.-C."/>
            <person name="Leyba T."/>
            <person name="Longmire J.L."/>
            <person name="Lopez F."/>
            <person name="Lou Y."/>
            <person name="Lowry S."/>
            <person name="Ludeman T."/>
            <person name="Manohar C.F."/>
            <person name="Mark G.A."/>
            <person name="McMurray K.L."/>
            <person name="Meincke L.J."/>
            <person name="Morgan J."/>
            <person name="Moyzis R.K."/>
            <person name="Mundt M.O."/>
            <person name="Munk A.C."/>
            <person name="Nandkeshwar R.D."/>
            <person name="Pitluck S."/>
            <person name="Pollard M."/>
            <person name="Predki P."/>
            <person name="Parson-Quintana B."/>
            <person name="Ramirez L."/>
            <person name="Rash S."/>
            <person name="Retterer J."/>
            <person name="Ricke D.O."/>
            <person name="Robinson D.L."/>
            <person name="Rodriguez A."/>
            <person name="Salamov A."/>
            <person name="Saunders E.H."/>
            <person name="Scott D."/>
            <person name="Shough T."/>
            <person name="Stallings R.L."/>
            <person name="Stalvey M."/>
            <person name="Sutherland R.D."/>
            <person name="Tapia R."/>
            <person name="Tesmer J.G."/>
            <person name="Thayer N."/>
            <person name="Thompson L.S."/>
            <person name="Tice H."/>
            <person name="Torney D.C."/>
            <person name="Tran-Gyamfi M."/>
            <person name="Tsai M."/>
            <person name="Ulanovsky L.E."/>
            <person name="Ustaszewska A."/>
            <person name="Vo N."/>
            <person name="White P.S."/>
            <person name="Williams A.L."/>
            <person name="Wills P.L."/>
            <person name="Wu J.-R."/>
            <person name="Wu K."/>
            <person name="Yang J."/>
            <person name="DeJong P."/>
            <person name="Bruce D."/>
            <person name="Doggett N.A."/>
            <person name="Deaven L."/>
            <person name="Schmutz J."/>
            <person name="Grimwood J."/>
            <person name="Richardson P."/>
            <person name="Rokhsar D.S."/>
            <person name="Eichler E.E."/>
            <person name="Gilna P."/>
            <person name="Lucas S.M."/>
            <person name="Myers R.M."/>
            <person name="Rubin E.M."/>
            <person name="Pennacchio L.A."/>
        </authorList>
    </citation>
    <scope>NUCLEOTIDE SEQUENCE [LARGE SCALE GENOMIC DNA]</scope>
</reference>
<reference key="4">
    <citation type="journal article" date="2004" name="Genome Res.">
        <title>The status, quality, and expansion of the NIH full-length cDNA project: the Mammalian Gene Collection (MGC).</title>
        <authorList>
            <consortium name="The MGC Project Team"/>
        </authorList>
    </citation>
    <scope>NUCLEOTIDE SEQUENCE [LARGE SCALE MRNA] (ISOFORM 1)</scope>
    <source>
        <tissue>Placenta</tissue>
    </source>
</reference>
<reference key="5">
    <citation type="journal article" date="2000" name="Genomics">
        <title>Characterization, chromosomal localization, and expression during hematopoietic differentiation of the gene encoding Arl6ip, ADP-ribosylation-like factor-6 interacting protein (ARL6).</title>
        <authorList>
            <person name="Pettersson M."/>
            <person name="Bessonova M."/>
            <person name="Gu H.F."/>
            <person name="Groop L.C."/>
            <person name="Jonsson J.I."/>
        </authorList>
    </citation>
    <scope>FUNCTION</scope>
    <scope>TISSUE SPECIFICITY</scope>
    <scope>SUBCELLULAR LOCATION</scope>
</reference>
<reference key="6">
    <citation type="journal article" date="2003" name="Mol. Cancer Res.">
        <title>ARMER, apoptotic regulator in the membrane of the endoplasmic reticulum, a novel inhibitor of apoptosis.</title>
        <authorList>
            <person name="Lui H.M."/>
            <person name="Chen J."/>
            <person name="Wang L."/>
            <person name="Naumovski L."/>
        </authorList>
    </citation>
    <scope>FUNCTION</scope>
    <scope>INDUCTION</scope>
    <scope>SUBCELLULAR LOCATION</scope>
</reference>
<reference key="7">
    <citation type="journal article" date="2003" name="Mol. Cancer Res.">
        <authorList>
            <person name="Lui H.M."/>
            <person name="Chen J."/>
            <person name="Wang L."/>
            <person name="Naumovski L."/>
        </authorList>
    </citation>
    <scope>ERRATUM OF PUBMED:12754298</scope>
</reference>
<reference key="8">
    <citation type="journal article" date="2013" name="FEBS Lett.">
        <title>Determination of topological structure of ARL6ip1 in cells: identification of the essential binding region of ARL6ip1 for conophylline.</title>
        <authorList>
            <person name="Kuroda M."/>
            <person name="Funasaki S."/>
            <person name="Saitoh T."/>
            <person name="Sasazawa Y."/>
            <person name="Nishiyama S."/>
            <person name="Umezawa K."/>
            <person name="Simizu S."/>
        </authorList>
    </citation>
    <scope>SUBCELLULAR LOCATION</scope>
    <scope>TOPOLOGY</scope>
</reference>
<reference key="9">
    <citation type="journal article" date="2014" name="Biochem. J.">
        <title>Arl6IP1 has the ability to shape the mammalian ER membrane in a reticulon-like fashion.</title>
        <authorList>
            <person name="Yamamoto Y."/>
            <person name="Yoshida A."/>
            <person name="Miyazaki N."/>
            <person name="Iwasaki K."/>
            <person name="Sakisaka T."/>
        </authorList>
    </citation>
    <scope>FUNCTION</scope>
    <scope>SUBCELLULAR LOCATION</scope>
    <scope>INTERACTION WITH ATL1</scope>
    <scope>SUBUNIT</scope>
    <scope>TRANSMEMBRANE DOMAIN</scope>
</reference>
<reference key="10">
    <citation type="journal article" date="2014" name="Kobe J. Med. Sci.">
        <title>Identification and characterization of TMEM33 as a reticulon-binding protein.</title>
        <authorList>
            <person name="Urade T."/>
            <person name="Yamamoto Y."/>
            <person name="Zhang X."/>
            <person name="Ku Y."/>
            <person name="Sakisaka T."/>
        </authorList>
    </citation>
    <scope>INTERACTION WITH TMEM33</scope>
</reference>
<reference key="11">
    <citation type="journal article" date="2014" name="Science">
        <title>Exome sequencing links corticospinal motor neuron disease to common neurodegenerative disorders.</title>
        <authorList>
            <person name="Novarino G."/>
            <person name="Fenstermaker A.G."/>
            <person name="Zaki M.S."/>
            <person name="Hofree M."/>
            <person name="Silhavy J.L."/>
            <person name="Heiberg A.D."/>
            <person name="Abdellateef M."/>
            <person name="Rosti B."/>
            <person name="Scott E."/>
            <person name="Mansour L."/>
            <person name="Masri A."/>
            <person name="Kayserili H."/>
            <person name="Al-Aama J.Y."/>
            <person name="Abdel-Salam G.M."/>
            <person name="Karminejad A."/>
            <person name="Kara M."/>
            <person name="Kara B."/>
            <person name="Bozorgmehri B."/>
            <person name="Ben-Omran T."/>
            <person name="Mojahedi F."/>
            <person name="Mahmoud I.G."/>
            <person name="Bouslam N."/>
            <person name="Bouhouche A."/>
            <person name="Benomar A."/>
            <person name="Hanein S."/>
            <person name="Raymond L."/>
            <person name="Forlani S."/>
            <person name="Mascaro M."/>
            <person name="Selim L."/>
            <person name="Shehata N."/>
            <person name="Al-Allawi N."/>
            <person name="Bindu P.S."/>
            <person name="Azam M."/>
            <person name="Gunel M."/>
            <person name="Caglayan A."/>
            <person name="Bilguvar K."/>
            <person name="Tolun A."/>
            <person name="Issa M.Y."/>
            <person name="Schroth J."/>
            <person name="Spencer E.G."/>
            <person name="Rosti R.O."/>
            <person name="Akizu N."/>
            <person name="Vaux K.K."/>
            <person name="Johansen A."/>
            <person name="Koh A.A."/>
            <person name="Megahed H."/>
            <person name="Durr A."/>
            <person name="Brice A."/>
            <person name="Stevanin G."/>
            <person name="Gabriel S.B."/>
            <person name="Ideker T."/>
            <person name="Gleeson J.G."/>
        </authorList>
    </citation>
    <scope>INVOLVEMENT IN SPG61</scope>
</reference>
<reference key="12">
    <citation type="journal article" date="2019" name="Genet. Med.">
        <title>Autozygome and high throughput confirmation of disease genes candidacy.</title>
        <authorList>
            <person name="Maddirevula S."/>
            <person name="Alzahrani F."/>
            <person name="Al-Owain M."/>
            <person name="Al Muhaizea M.A."/>
            <person name="Kayyali H.R."/>
            <person name="AlHashem A."/>
            <person name="Rahbeeni Z."/>
            <person name="Al-Otaibi M."/>
            <person name="Alzaidan H.I."/>
            <person name="Balobaid A."/>
            <person name="El Khashab H.Y."/>
            <person name="Bubshait D.K."/>
            <person name="Faden M."/>
            <person name="Yamani S.A."/>
            <person name="Dabbagh O."/>
            <person name="Al-Mureikhi M."/>
            <person name="Jasser A.A."/>
            <person name="Alsaif H.S."/>
            <person name="Alluhaydan I."/>
            <person name="Seidahmed M.Z."/>
            <person name="Alabbasi B.H."/>
            <person name="Almogarri I."/>
            <person name="Kurdi W."/>
            <person name="Akleh H."/>
            <person name="Qari A."/>
            <person name="Al Tala S.M."/>
            <person name="Alhomaidi S."/>
            <person name="Kentab A.Y."/>
            <person name="Salih M.A."/>
            <person name="Chedrawi A."/>
            <person name="Alameer S."/>
            <person name="Tabarki B."/>
            <person name="Shamseldin H.E."/>
            <person name="Patel N."/>
            <person name="Ibrahim N."/>
            <person name="Abdulwahab F."/>
            <person name="Samira M."/>
            <person name="Goljan E."/>
            <person name="Abouelhoda M."/>
            <person name="Meyer B.F."/>
            <person name="Hashem M."/>
            <person name="Shaheen R."/>
            <person name="AlShahwan S."/>
            <person name="Alfadhel M."/>
            <person name="Ben-Omran T."/>
            <person name="Al-Qattan M.M."/>
            <person name="Monies D."/>
            <person name="Alkuraya F.S."/>
        </authorList>
    </citation>
    <scope>VARIANT SPG61 38-ARG--GLU-203 DEL</scope>
</reference>
<sequence length="203" mass="23363">MAEGDNRSTNLLAAETASLEEQLQGWGEVMLMADKVLRWERAWFPPAIMGVVSLVFLIIYYLDPSVLSGVSCFVMFLCLADYLVPILAPRIFGSNKWTTEQQQRFHEICSNLVKTRRRAVGWWKRLFTLKEEKPKMYFMTMIVSLAAVAWVGQQVHNLLLTYLIVTSLLLLPGLNQHGIILKYIGMAKREINKLLKQKEKKNE</sequence>
<proteinExistence type="evidence at protein level"/>
<name>AR6P1_HUMAN</name>
<comment type="function">
    <text evidence="1 4 6 10">Positively regulates SLC1A1/EAAC1-mediated glutamate transport by increasing its affinity for glutamate in a PKC activity-dependent manner. Promotes the catalytic efficiency of SLC1A1/EAAC1 probably by reducing its interaction with ARL6IP5, a negative regulator of SLC1A1/EAAC1-mediated glutamate transport (By similarity). Plays a role in the formation and stabilization of endoplasmic reticulum tubules (PubMed:24262037). Negatively regulates apoptosis, possibly by modulating the activity of caspase-9 (CASP9). Inhibits cleavage of CASP9-dependent substrates and downstream markers of apoptosis but not CASP9 itself (PubMed:12754298). May be involved in protein transport, membrane trafficking, or cell signaling during hematopoietic maturation (PubMed:10995579).</text>
</comment>
<comment type="subunit">
    <text evidence="1 6 8">Homooligomer (PubMed:24262037). Heterodimer with ARL6IP5. Interacts with ARL6 (By similarity). Interacts with TMEM33 (PubMed:25612671). Interacts with ATL1 (PubMed:24262037).</text>
</comment>
<comment type="interaction">
    <interactant intactId="EBI-714543">
        <id>Q15041</id>
    </interactant>
    <interactant intactId="EBI-2876502">
        <id>Q96CM8</id>
        <label>ACSF2</label>
    </interactant>
    <organismsDiffer>false</organismsDiffer>
    <experiments>8</experiments>
</comment>
<comment type="interaction">
    <interactant intactId="EBI-714543">
        <id>Q15041</id>
    </interactant>
    <interactant intactId="EBI-13059134">
        <id>Q13520</id>
        <label>AQP6</label>
    </interactant>
    <organismsDiffer>false</organismsDiffer>
    <experiments>3</experiments>
</comment>
<comment type="interaction">
    <interactant intactId="EBI-714543">
        <id>Q15041</id>
    </interactant>
    <interactant intactId="EBI-714543">
        <id>Q15041</id>
        <label>ARL6IP1</label>
    </interactant>
    <organismsDiffer>false</organismsDiffer>
    <experiments>4</experiments>
</comment>
<comment type="interaction">
    <interactant intactId="EBI-714543">
        <id>Q15041</id>
    </interactant>
    <interactant intactId="EBI-18323646">
        <id>Q8NEA5</id>
        <label>C19orf18</label>
    </interactant>
    <organismsDiffer>false</organismsDiffer>
    <experiments>3</experiments>
</comment>
<comment type="interaction">
    <interactant intactId="EBI-714543">
        <id>Q15041</id>
    </interactant>
    <interactant intactId="EBI-739994">
        <id>Q9Y5P4</id>
        <label>CERT1</label>
    </interactant>
    <organismsDiffer>false</organismsDiffer>
    <experiments>5</experiments>
</comment>
<comment type="interaction">
    <interactant intactId="EBI-714543">
        <id>Q15041</id>
    </interactant>
    <interactant intactId="EBI-11156432">
        <id>Q9Y5P4-2</id>
        <label>CERT1</label>
    </interactant>
    <organismsDiffer>false</organismsDiffer>
    <experiments>3</experiments>
</comment>
<comment type="interaction">
    <interactant intactId="EBI-714543">
        <id>Q15041</id>
    </interactant>
    <interactant intactId="EBI-517508">
        <id>Q9NR28</id>
        <label>DIABLO</label>
    </interactant>
    <organismsDiffer>false</organismsDiffer>
    <experiments>9</experiments>
</comment>
<comment type="interaction">
    <interactant intactId="EBI-714543">
        <id>Q15041</id>
    </interactant>
    <interactant intactId="EBI-2870749">
        <id>Q9NZN3</id>
        <label>EHD3</label>
    </interactant>
    <organismsDiffer>false</organismsDiffer>
    <experiments>3</experiments>
</comment>
<comment type="interaction">
    <interactant intactId="EBI-714543">
        <id>Q15041</id>
    </interactant>
    <interactant intactId="EBI-4319440">
        <id>P54849</id>
        <label>EMP1</label>
    </interactant>
    <organismsDiffer>false</organismsDiffer>
    <experiments>3</experiments>
</comment>
<comment type="interaction">
    <interactant intactId="EBI-714543">
        <id>Q15041</id>
    </interactant>
    <interactant intactId="EBI-740459">
        <id>P51116</id>
        <label>FXR2</label>
    </interactant>
    <organismsDiffer>false</organismsDiffer>
    <experiments>3</experiments>
</comment>
<comment type="interaction">
    <interactant intactId="EBI-714543">
        <id>Q15041</id>
    </interactant>
    <interactant intactId="EBI-9304251">
        <id>Q05329</id>
        <label>GAD2</label>
    </interactant>
    <organismsDiffer>false</organismsDiffer>
    <experiments>6</experiments>
</comment>
<comment type="interaction">
    <interactant intactId="EBI-714543">
        <id>Q15041</id>
    </interactant>
    <interactant intactId="EBI-1052570">
        <id>O95995</id>
        <label>GAS8</label>
    </interactant>
    <organismsDiffer>false</organismsDiffer>
    <experiments>3</experiments>
</comment>
<comment type="interaction">
    <interactant intactId="EBI-714543">
        <id>Q15041</id>
    </interactant>
    <interactant intactId="EBI-2465479">
        <id>Q9H4A6</id>
        <label>GOLPH3</label>
    </interactant>
    <organismsDiffer>false</organismsDiffer>
    <experiments>3</experiments>
</comment>
<comment type="interaction">
    <interactant intactId="EBI-714543">
        <id>Q15041</id>
    </interactant>
    <interactant intactId="EBI-739467">
        <id>Q9H8Y8</id>
        <label>GORASP2</label>
    </interactant>
    <organismsDiffer>false</organismsDiffer>
    <experiments>4</experiments>
</comment>
<comment type="interaction">
    <interactant intactId="EBI-714543">
        <id>Q15041</id>
    </interactant>
    <interactant intactId="EBI-11955647">
        <id>Q8TDV0</id>
        <label>GPR151</label>
    </interactant>
    <organismsDiffer>false</organismsDiffer>
    <experiments>3</experiments>
</comment>
<comment type="interaction">
    <interactant intactId="EBI-714543">
        <id>Q15041</id>
    </interactant>
    <interactant intactId="EBI-13345167">
        <id>Q8TDT2</id>
        <label>GPR152</label>
    </interactant>
    <organismsDiffer>false</organismsDiffer>
    <experiments>3</experiments>
</comment>
<comment type="interaction">
    <interactant intactId="EBI-714543">
        <id>Q15041</id>
    </interactant>
    <interactant intactId="EBI-18053395">
        <id>Q7Z5P4</id>
        <label>HSD17B13</label>
    </interactant>
    <organismsDiffer>false</organismsDiffer>
    <experiments>3</experiments>
</comment>
<comment type="interaction">
    <interactant intactId="EBI-714543">
        <id>Q15041</id>
    </interactant>
    <interactant intactId="EBI-749162">
        <id>Q9BT40</id>
        <label>INPP5K</label>
    </interactant>
    <organismsDiffer>false</organismsDiffer>
    <experiments>5</experiments>
</comment>
<comment type="interaction">
    <interactant intactId="EBI-714543">
        <id>Q15041</id>
    </interactant>
    <interactant intactId="EBI-2816356">
        <id>Q8IX19</id>
        <label>MCEMP1</label>
    </interactant>
    <organismsDiffer>false</organismsDiffer>
    <experiments>3</experiments>
</comment>
<comment type="interaction">
    <interactant intactId="EBI-714543">
        <id>Q15041</id>
    </interactant>
    <interactant intactId="EBI-373355">
        <id>Q5SR56</id>
        <label>MFSD14B</label>
    </interactant>
    <organismsDiffer>false</organismsDiffer>
    <experiments>3</experiments>
</comment>
<comment type="interaction">
    <interactant intactId="EBI-714543">
        <id>Q15041</id>
    </interactant>
    <interactant intactId="EBI-3920969">
        <id>Q6N075</id>
        <label>MFSD5</label>
    </interactant>
    <organismsDiffer>false</organismsDiffer>
    <experiments>3</experiments>
</comment>
<comment type="interaction">
    <interactant intactId="EBI-714543">
        <id>Q15041</id>
    </interactant>
    <interactant intactId="EBI-724754">
        <id>O14880</id>
        <label>MGST3</label>
    </interactant>
    <organismsDiffer>false</organismsDiffer>
    <experiments>3</experiments>
</comment>
<comment type="interaction">
    <interactant intactId="EBI-714543">
        <id>Q15041</id>
    </interactant>
    <interactant intactId="EBI-11988931">
        <id>Q96C03-3</id>
        <label>MIEF2</label>
    </interactant>
    <organismsDiffer>false</organismsDiffer>
    <experiments>3</experiments>
</comment>
<comment type="interaction">
    <interactant intactId="EBI-714543">
        <id>Q15041</id>
    </interactant>
    <interactant intactId="EBI-7825321">
        <id>Q96E29</id>
        <label>MTERF3</label>
    </interactant>
    <organismsDiffer>false</organismsDiffer>
    <experiments>3</experiments>
</comment>
<comment type="interaction">
    <interactant intactId="EBI-714543">
        <id>Q15041</id>
    </interactant>
    <interactant intactId="EBI-709754">
        <id>Q9HB07</id>
        <label>MYG1</label>
    </interactant>
    <organismsDiffer>false</organismsDiffer>
    <experiments>6</experiments>
</comment>
<comment type="interaction">
    <interactant intactId="EBI-714543">
        <id>Q15041</id>
    </interactant>
    <interactant intactId="EBI-3921185">
        <id>Q9H115</id>
        <label>NAPB</label>
    </interactant>
    <organismsDiffer>false</organismsDiffer>
    <experiments>3</experiments>
</comment>
<comment type="interaction">
    <interactant intactId="EBI-714543">
        <id>Q15041</id>
    </interactant>
    <interactant intactId="EBI-10323810">
        <id>Q9ULP0</id>
        <label>NDRG4</label>
    </interactant>
    <organismsDiffer>false</organismsDiffer>
    <experiments>3</experiments>
</comment>
<comment type="interaction">
    <interactant intactId="EBI-714543">
        <id>Q15041</id>
    </interactant>
    <interactant intactId="EBI-11978907">
        <id>Q9ULP0-2</id>
        <label>NDRG4</label>
    </interactant>
    <organismsDiffer>false</organismsDiffer>
    <experiments>3</experiments>
</comment>
<comment type="interaction">
    <interactant intactId="EBI-714543">
        <id>Q15041</id>
    </interactant>
    <interactant intactId="EBI-741158">
        <id>Q96HA8</id>
        <label>NTAQ1</label>
    </interactant>
    <organismsDiffer>false</organismsDiffer>
    <experiments>3</experiments>
</comment>
<comment type="interaction">
    <interactant intactId="EBI-714543">
        <id>Q15041</id>
    </interactant>
    <interactant intactId="EBI-721147">
        <id>Q9Y3D7</id>
        <label>PAM16</label>
    </interactant>
    <organismsDiffer>false</organismsDiffer>
    <experiments>3</experiments>
</comment>
<comment type="interaction">
    <interactant intactId="EBI-714543">
        <id>Q15041</id>
    </interactant>
    <interactant intactId="EBI-10244393">
        <id>Q5JS98</id>
        <label>PBX3</label>
    </interactant>
    <organismsDiffer>false</organismsDiffer>
    <experiments>3</experiments>
</comment>
<comment type="interaction">
    <interactant intactId="EBI-714543">
        <id>Q15041</id>
    </interactant>
    <interactant intactId="EBI-79165">
        <id>Q9NRD5</id>
        <label>PICK1</label>
    </interactant>
    <organismsDiffer>false</organismsDiffer>
    <experiments>3</experiments>
</comment>
<comment type="interaction">
    <interactant intactId="EBI-714543">
        <id>Q15041</id>
    </interactant>
    <interactant intactId="EBI-742898">
        <id>P43378</id>
        <label>PTPN9</label>
    </interactant>
    <organismsDiffer>false</organismsDiffer>
    <experiments>3</experiments>
</comment>
<comment type="interaction">
    <interactant intactId="EBI-714543">
        <id>Q15041</id>
    </interactant>
    <interactant intactId="EBI-744685">
        <id>Q14088</id>
        <label>RAB33A</label>
    </interactant>
    <organismsDiffer>false</organismsDiffer>
    <experiments>3</experiments>
</comment>
<comment type="interaction">
    <interactant intactId="EBI-714543">
        <id>Q15041</id>
    </interactant>
    <interactant intactId="EBI-14065960">
        <id>Q96HR9-2</id>
        <label>REEP6</label>
    </interactant>
    <organismsDiffer>false</organismsDiffer>
    <experiments>3</experiments>
</comment>
<comment type="interaction">
    <interactant intactId="EBI-714543">
        <id>Q15041</id>
    </interactant>
    <interactant intactId="EBI-10192441">
        <id>Q86VR2</id>
        <label>RETREG3</label>
    </interactant>
    <organismsDiffer>false</organismsDiffer>
    <experiments>7</experiments>
</comment>
<comment type="interaction">
    <interactant intactId="EBI-714543">
        <id>Q15041</id>
    </interactant>
    <interactant intactId="EBI-348482">
        <id>Q99942</id>
        <label>RNF5</label>
    </interactant>
    <organismsDiffer>false</organismsDiffer>
    <experiments>3</experiments>
</comment>
<comment type="interaction">
    <interactant intactId="EBI-714543">
        <id>Q15041</id>
    </interactant>
    <interactant intactId="EBI-715945">
        <id>Q9NQC3</id>
        <label>RTN4</label>
    </interactant>
    <organismsDiffer>false</organismsDiffer>
    <experiments>5</experiments>
</comment>
<comment type="interaction">
    <interactant intactId="EBI-714543">
        <id>Q15041</id>
    </interactant>
    <interactant intactId="EBI-727004">
        <id>O00560</id>
        <label>SDCBP</label>
    </interactant>
    <organismsDiffer>false</organismsDiffer>
    <experiments>3</experiments>
</comment>
<comment type="interaction">
    <interactant intactId="EBI-714543">
        <id>Q15041</id>
    </interactant>
    <interactant intactId="EBI-714881">
        <id>Q9HC62</id>
        <label>SENP2</label>
    </interactant>
    <organismsDiffer>false</organismsDiffer>
    <experiments>3</experiments>
</comment>
<comment type="interaction">
    <interactant intactId="EBI-714543">
        <id>Q15041</id>
    </interactant>
    <interactant intactId="EBI-13369834">
        <id>Q8N114-3</id>
        <label>SHISA5</label>
    </interactant>
    <organismsDiffer>false</organismsDiffer>
    <experiments>3</experiments>
</comment>
<comment type="interaction">
    <interactant intactId="EBI-714543">
        <id>Q15041</id>
    </interactant>
    <interactant intactId="EBI-352908">
        <id>P34897</id>
        <label>SHMT2</label>
    </interactant>
    <organismsDiffer>false</organismsDiffer>
    <experiments>6</experiments>
</comment>
<comment type="interaction">
    <interactant intactId="EBI-714543">
        <id>Q15041</id>
    </interactant>
    <interactant intactId="EBI-18159983">
        <id>Q3KNW5</id>
        <label>SLC10A6</label>
    </interactant>
    <organismsDiffer>false</organismsDiffer>
    <experiments>3</experiments>
</comment>
<comment type="interaction">
    <interactant intactId="EBI-714543">
        <id>Q15041</id>
    </interactant>
    <interactant intactId="EBI-17295964">
        <id>Q9NQQ7-3</id>
        <label>SLC35C2</label>
    </interactant>
    <organismsDiffer>false</organismsDiffer>
    <experiments>3</experiments>
</comment>
<comment type="interaction">
    <interactant intactId="EBI-714543">
        <id>Q15041</id>
    </interactant>
    <interactant intactId="EBI-2822329">
        <id>Q13596</id>
        <label>SNX1</label>
    </interactant>
    <organismsDiffer>false</organismsDiffer>
    <experiments>4</experiments>
</comment>
<comment type="interaction">
    <interactant intactId="EBI-714543">
        <id>Q15041</id>
    </interactant>
    <interactant intactId="EBI-10266928">
        <id>Q8N5Z3</id>
        <label>SNX10</label>
    </interactant>
    <organismsDiffer>false</organismsDiffer>
    <experiments>3</experiments>
</comment>
<comment type="interaction">
    <interactant intactId="EBI-714543">
        <id>Q15041</id>
    </interactant>
    <interactant intactId="EBI-10329478">
        <id>Q9Y5X0</id>
        <label>SNX10</label>
    </interactant>
    <organismsDiffer>false</organismsDiffer>
    <experiments>6</experiments>
</comment>
<comment type="interaction">
    <interactant intactId="EBI-714543">
        <id>Q15041</id>
    </interactant>
    <interactant intactId="EBI-10329449">
        <id>Q9Y5W9</id>
        <label>SNX11</label>
    </interactant>
    <organismsDiffer>false</organismsDiffer>
    <experiments>6</experiments>
</comment>
<comment type="interaction">
    <interactant intactId="EBI-714543">
        <id>Q15041</id>
    </interactant>
    <interactant intactId="EBI-1752602">
        <id>Q9UMY4</id>
        <label>SNX12</label>
    </interactant>
    <organismsDiffer>false</organismsDiffer>
    <experiments>3</experiments>
</comment>
<comment type="interaction">
    <interactant intactId="EBI-714543">
        <id>Q15041</id>
    </interactant>
    <interactant intactId="EBI-22419305">
        <id>Q9UMY4-1</id>
        <label>SNX12</label>
    </interactant>
    <organismsDiffer>false</organismsDiffer>
    <experiments>3</experiments>
</comment>
<comment type="interaction">
    <interactant intactId="EBI-714543">
        <id>Q15041</id>
    </interactant>
    <interactant intactId="EBI-725924">
        <id>Q9NRS6</id>
        <label>SNX15</label>
    </interactant>
    <organismsDiffer>false</organismsDiffer>
    <experiments>4</experiments>
</comment>
<comment type="interaction">
    <interactant intactId="EBI-714543">
        <id>Q15041</id>
    </interactant>
    <interactant intactId="EBI-1046690">
        <id>O60749</id>
        <label>SNX2</label>
    </interactant>
    <organismsDiffer>false</organismsDiffer>
    <experiments>3</experiments>
</comment>
<comment type="interaction">
    <interactant intactId="EBI-714543">
        <id>Q15041</id>
    </interactant>
    <interactant intactId="EBI-727209">
        <id>O60493</id>
        <label>SNX3</label>
    </interactant>
    <organismsDiffer>false</organismsDiffer>
    <experiments>3</experiments>
</comment>
<comment type="interaction">
    <interactant intactId="EBI-714543">
        <id>Q15041</id>
    </interactant>
    <interactant intactId="EBI-724909">
        <id>O95219</id>
        <label>SNX4</label>
    </interactant>
    <organismsDiffer>false</organismsDiffer>
    <experiments>3</experiments>
</comment>
<comment type="interaction">
    <interactant intactId="EBI-714543">
        <id>Q15041</id>
    </interactant>
    <interactant intactId="EBI-1752557">
        <id>Q9Y5X2</id>
        <label>SNX8</label>
    </interactant>
    <organismsDiffer>false</organismsDiffer>
    <experiments>3</experiments>
</comment>
<comment type="interaction">
    <interactant intactId="EBI-714543">
        <id>Q15041</id>
    </interactant>
    <interactant intactId="EBI-742688">
        <id>Q9NZD8</id>
        <label>SPG21</label>
    </interactant>
    <organismsDiffer>false</organismsDiffer>
    <experiments>6</experiments>
</comment>
<comment type="interaction">
    <interactant intactId="EBI-714543">
        <id>Q15041</id>
    </interactant>
    <interactant intactId="EBI-17217258">
        <id>Q96DR4</id>
        <label>STARD4</label>
    </interactant>
    <organismsDiffer>false</organismsDiffer>
    <experiments>3</experiments>
</comment>
<comment type="interaction">
    <interactant intactId="EBI-714543">
        <id>Q15041</id>
    </interactant>
    <interactant intactId="EBI-10176959">
        <id>E5KS60</id>
        <label>SUCLA2</label>
    </interactant>
    <organismsDiffer>false</organismsDiffer>
    <experiments>3</experiments>
</comment>
<comment type="interaction">
    <interactant intactId="EBI-714543">
        <id>Q15041</id>
    </interactant>
    <interactant intactId="EBI-2269898">
        <id>Q9P2R7</id>
        <label>SUCLA2</label>
    </interactant>
    <organismsDiffer>false</organismsDiffer>
    <experiments>6</experiments>
</comment>
<comment type="interaction">
    <interactant intactId="EBI-714543">
        <id>Q15041</id>
    </interactant>
    <interactant intactId="EBI-1045099">
        <id>Q9BW92</id>
        <label>TARS2</label>
    </interactant>
    <organismsDiffer>false</organismsDiffer>
    <experiments>3</experiments>
</comment>
<comment type="interaction">
    <interactant intactId="EBI-714543">
        <id>Q15041</id>
    </interactant>
    <interactant intactId="EBI-1049924">
        <id>Q00059</id>
        <label>TFAM</label>
    </interactant>
    <organismsDiffer>false</organismsDiffer>
    <experiments>3</experiments>
</comment>
<comment type="interaction">
    <interactant intactId="EBI-714543">
        <id>Q15041</id>
    </interactant>
    <interactant intactId="EBI-11603430">
        <id>Q6PL24</id>
        <label>TMED8</label>
    </interactant>
    <organismsDiffer>false</organismsDiffer>
    <experiments>3</experiments>
</comment>
<comment type="interaction">
    <interactant intactId="EBI-714543">
        <id>Q15041</id>
    </interactant>
    <interactant intactId="EBI-8638294">
        <id>Q9NUH8</id>
        <label>TMEM14B</label>
    </interactant>
    <organismsDiffer>false</organismsDiffer>
    <experiments>3</experiments>
</comment>
<comment type="interaction">
    <interactant intactId="EBI-714543">
        <id>Q15041</id>
    </interactant>
    <interactant intactId="EBI-10314986">
        <id>Q9NWD8</id>
        <label>TMEM248</label>
    </interactant>
    <organismsDiffer>false</organismsDiffer>
    <experiments>3</experiments>
</comment>
<comment type="interaction">
    <interactant intactId="EBI-714543">
        <id>Q15041</id>
    </interactant>
    <interactant intactId="EBI-12019210">
        <id>P61165</id>
        <label>TMEM258</label>
    </interactant>
    <organismsDiffer>false</organismsDiffer>
    <experiments>3</experiments>
</comment>
<comment type="interaction">
    <interactant intactId="EBI-714543">
        <id>Q15041</id>
    </interactant>
    <interactant intactId="EBI-12261790">
        <id>A0A384ME17</id>
        <label>TUFM</label>
    </interactant>
    <organismsDiffer>false</organismsDiffer>
    <experiments>6</experiments>
</comment>
<comment type="interaction">
    <interactant intactId="EBI-714543">
        <id>Q15041</id>
    </interactant>
    <interactant intactId="EBI-359097">
        <id>P49411</id>
        <label>TUFM</label>
    </interactant>
    <organismsDiffer>false</organismsDiffer>
    <experiments>3</experiments>
</comment>
<comment type="interaction">
    <interactant intactId="EBI-714543">
        <id>Q15041</id>
    </interactant>
    <interactant intactId="EBI-10180829">
        <id>Q7KZS0</id>
        <label>UBE2I</label>
    </interactant>
    <organismsDiffer>false</organismsDiffer>
    <experiments>3</experiments>
</comment>
<comment type="interaction">
    <interactant intactId="EBI-714543">
        <id>Q15041</id>
    </interactant>
    <interactant intactId="EBI-1055364">
        <id>Q3ZAQ7</id>
        <label>VMA21</label>
    </interactant>
    <organismsDiffer>false</organismsDiffer>
    <experiments>3</experiments>
</comment>
<comment type="interaction">
    <interactant intactId="EBI-714543">
        <id>Q15041</id>
    </interactant>
    <interactant intactId="EBI-9478589">
        <id>Q96P53</id>
        <label>WDFY2</label>
    </interactant>
    <organismsDiffer>false</organismsDiffer>
    <experiments>3</experiments>
</comment>
<comment type="interaction">
    <interactant intactId="EBI-714543">
        <id>Q15041</id>
    </interactant>
    <interactant intactId="EBI-719396">
        <id>Q9Y4P8</id>
        <label>WIPI2</label>
    </interactant>
    <organismsDiffer>false</organismsDiffer>
    <experiments>3</experiments>
</comment>
<comment type="interaction">
    <interactant intactId="EBI-714543">
        <id>Q15041</id>
    </interactant>
    <interactant intactId="EBI-751253">
        <id>Q9BSR8</id>
        <label>YIPF4</label>
    </interactant>
    <organismsDiffer>false</organismsDiffer>
    <experiments>3</experiments>
</comment>
<comment type="interaction">
    <interactant intactId="EBI-714543">
        <id>Q15041</id>
    </interactant>
    <interactant intactId="EBI-2849569">
        <id>Q9BQ24</id>
        <label>ZFYVE21</label>
    </interactant>
    <organismsDiffer>false</organismsDiffer>
    <experiments>6</experiments>
</comment>
<comment type="interaction">
    <interactant intactId="EBI-714543">
        <id>Q15041</id>
    </interactant>
    <interactant intactId="EBI-25475897">
        <id>P0DTC6</id>
        <label>6</label>
    </interactant>
    <organismsDiffer>true</organismsDiffer>
    <experiments>3</experiments>
</comment>
<comment type="subcellular location">
    <subcellularLocation>
        <location evidence="3">Endomembrane system</location>
        <topology evidence="3">Multi-pass membrane protein</topology>
    </subcellularLocation>
    <subcellularLocation>
        <location evidence="4 5 6">Endoplasmic reticulum membrane</location>
        <topology evidence="5">Multi-pass membrane protein</topology>
    </subcellularLocation>
    <subcellularLocation>
        <location evidence="1">Endoplasmic reticulum</location>
    </subcellularLocation>
    <text evidence="6">Predominantly localized to intracytoplasmic membranes. Preferentially localizes at the ER tubules and the edge of the ER sheets, both of which are characterized by a high membrane curvature.</text>
</comment>
<comment type="alternative products">
    <event type="alternative splicing"/>
    <isoform>
        <id>Q15041-1</id>
        <name>1</name>
        <sequence type="displayed"/>
    </isoform>
    <isoform>
        <id>Q15041-2</id>
        <name>2</name>
        <sequence type="described" ref="VSP_057297"/>
    </isoform>
    <isoform>
        <id>Q15041-3</id>
        <name>3</name>
        <sequence type="described" ref="VSP_057298"/>
    </isoform>
</comment>
<comment type="tissue specificity">
    <text evidence="3">Expressed in all hematopoietic cell lineages, but the highest level of expression is found in early myeloid progenitor cells. Expressed in brain, bone marrow, thymus and lung. Expressed at low level in liver, kidney and spleen. Not detected in heart.</text>
</comment>
<comment type="developmental stage">
    <text>Down-regulated during myeloid differentiation.</text>
</comment>
<comment type="induction">
    <text evidence="4">Down-regulated by apoptotic stimuli.</text>
</comment>
<comment type="domain">
    <text evidence="6">The transmembrane domains are required for its ability to shape the endoplasmic reticulum membrane into tubules.</text>
</comment>
<comment type="disease" evidence="7 9">
    <disease id="DI-04045">
        <name>Spastic paraplegia 61, autosomal recessive</name>
        <acronym>SPG61</acronym>
        <description>A complicated form of spastic paraplegia with polysensory and motor neuropathy. Spastic paraplegia is a neurodegenerative disorder characterized by a slow, gradual, progressive weakness and spasticity of the lower limbs. Rate of progression and the severity of symptoms are quite variable. Initial symptoms may include difficulty with balance, weakness and stiffness in the legs, muscle spasms, and dragging the toes when walking. In some forms of the disorder, bladder symptoms (such as incontinence) may appear, or the weakness and stiffness may spread to other parts of the body.</description>
        <dbReference type="MIM" id="615685"/>
    </disease>
    <text>The disease is caused by variants affecting the gene represented in this entry.</text>
</comment>
<comment type="similarity">
    <text evidence="13">Belongs to the ARL6ip family.</text>
</comment>
<comment type="sequence caution" evidence="13">
    <conflict type="erroneous initiation">
        <sequence resource="EMBL-CDS" id="BAA06683"/>
    </conflict>
    <text>Truncated N-terminus.</text>
</comment>
<protein>
    <recommendedName>
        <fullName>ADP-ribosylation factor-like protein 6-interacting protein 1</fullName>
        <shortName>ARL-6-interacting protein 1</shortName>
        <shortName>Aip-1</shortName>
    </recommendedName>
    <alternativeName>
        <fullName evidence="11">Apoptotic regulator in the membrane of the endoplasmic reticulum</fullName>
    </alternativeName>
</protein>